<protein>
    <recommendedName>
        <fullName evidence="1">Fumarate reductase subunit D</fullName>
    </recommendedName>
    <alternativeName>
        <fullName evidence="1">Fumarate reductase 13 kDa hydrophobic protein</fullName>
    </alternativeName>
    <alternativeName>
        <fullName evidence="1">Quinol-fumarate reductase subunit D</fullName>
        <shortName evidence="1">QFR subunit D</shortName>
    </alternativeName>
</protein>
<comment type="function">
    <text evidence="1">Two distinct, membrane-bound, FAD-containing enzymes are responsible for the catalysis of fumarate and succinate interconversion; fumarate reductase is used in anaerobic growth, and succinate dehydrogenase is used in aerobic growth. Anchors the catalytic components of the fumarate reductase complex to the cell inner membrane, binds quinones.</text>
</comment>
<comment type="subunit">
    <text evidence="1">Part of an enzyme complex containing four subunits: a flavoprotein (FrdA), an iron-sulfur protein (FrdB), and two hydrophobic anchor proteins (FrdC and FrdD).</text>
</comment>
<comment type="subcellular location">
    <subcellularLocation>
        <location evidence="1">Cell inner membrane</location>
        <topology evidence="1">Multi-pass membrane protein</topology>
    </subcellularLocation>
</comment>
<comment type="similarity">
    <text evidence="1">Belongs to the FrdD family.</text>
</comment>
<evidence type="ECO:0000255" key="1">
    <source>
        <dbReference type="HAMAP-Rule" id="MF_00709"/>
    </source>
</evidence>
<dbReference type="EMBL" id="AE017220">
    <property type="protein sequence ID" value="AAX68125.1"/>
    <property type="molecule type" value="Genomic_DNA"/>
</dbReference>
<dbReference type="RefSeq" id="WP_001541348.1">
    <property type="nucleotide sequence ID" value="NC_006905.1"/>
</dbReference>
<dbReference type="SMR" id="Q57GN7"/>
<dbReference type="KEGG" id="sec:SCH_4219"/>
<dbReference type="HOGENOM" id="CLU_168367_0_0_6"/>
<dbReference type="Proteomes" id="UP000000538">
    <property type="component" value="Chromosome"/>
</dbReference>
<dbReference type="GO" id="GO:0045283">
    <property type="term" value="C:fumarate reductase complex"/>
    <property type="evidence" value="ECO:0007669"/>
    <property type="project" value="UniProtKB-UniRule"/>
</dbReference>
<dbReference type="GO" id="GO:0005886">
    <property type="term" value="C:plasma membrane"/>
    <property type="evidence" value="ECO:0007669"/>
    <property type="project" value="UniProtKB-SubCell"/>
</dbReference>
<dbReference type="GO" id="GO:0000104">
    <property type="term" value="F:succinate dehydrogenase activity"/>
    <property type="evidence" value="ECO:0007669"/>
    <property type="project" value="UniProtKB-UniRule"/>
</dbReference>
<dbReference type="GO" id="GO:0006106">
    <property type="term" value="P:fumarate metabolic process"/>
    <property type="evidence" value="ECO:0007669"/>
    <property type="project" value="InterPro"/>
</dbReference>
<dbReference type="CDD" id="cd00547">
    <property type="entry name" value="QFR_TypeD_subunitD"/>
    <property type="match status" value="1"/>
</dbReference>
<dbReference type="FunFam" id="1.20.1300.10:FF:000002">
    <property type="entry name" value="Fumarate reductase subunit D"/>
    <property type="match status" value="1"/>
</dbReference>
<dbReference type="Gene3D" id="1.20.1300.10">
    <property type="entry name" value="Fumarate reductase/succinate dehydrogenase, transmembrane subunit"/>
    <property type="match status" value="1"/>
</dbReference>
<dbReference type="HAMAP" id="MF_00709">
    <property type="entry name" value="Fumarate_red_D"/>
    <property type="match status" value="1"/>
</dbReference>
<dbReference type="InterPro" id="IPR003418">
    <property type="entry name" value="Fumarate_red_D"/>
</dbReference>
<dbReference type="InterPro" id="IPR034804">
    <property type="entry name" value="SQR/QFR_C/D"/>
</dbReference>
<dbReference type="NCBIfam" id="NF003977">
    <property type="entry name" value="PRK05470.1-1"/>
    <property type="match status" value="1"/>
</dbReference>
<dbReference type="Pfam" id="PF02313">
    <property type="entry name" value="Fumarate_red_D"/>
    <property type="match status" value="1"/>
</dbReference>
<dbReference type="PIRSF" id="PIRSF000179">
    <property type="entry name" value="FrdD"/>
    <property type="match status" value="1"/>
</dbReference>
<dbReference type="SUPFAM" id="SSF81343">
    <property type="entry name" value="Fumarate reductase respiratory complex transmembrane subunits"/>
    <property type="match status" value="1"/>
</dbReference>
<keyword id="KW-0997">Cell inner membrane</keyword>
<keyword id="KW-1003">Cell membrane</keyword>
<keyword id="KW-0472">Membrane</keyword>
<keyword id="KW-0812">Transmembrane</keyword>
<keyword id="KW-1133">Transmembrane helix</keyword>
<organism>
    <name type="scientific">Salmonella choleraesuis (strain SC-B67)</name>
    <dbReference type="NCBI Taxonomy" id="321314"/>
    <lineage>
        <taxon>Bacteria</taxon>
        <taxon>Pseudomonadati</taxon>
        <taxon>Pseudomonadota</taxon>
        <taxon>Gammaproteobacteria</taxon>
        <taxon>Enterobacterales</taxon>
        <taxon>Enterobacteriaceae</taxon>
        <taxon>Salmonella</taxon>
    </lineage>
</organism>
<sequence length="119" mass="13079">MINPNPKRSDEPVFWGLFGAGGMWGAIIAPVIVLLVSIMLPLGLFPGDALSFERVLTFAQSFIGRVFLFLMIVLPLWCGLHRMHHAMHDLKIHVPAGKWVFYGLAAILTVVTAIGVITL</sequence>
<gene>
    <name evidence="1" type="primary">frdD</name>
    <name type="ordered locus">SCH_4219</name>
</gene>
<accession>Q57GN7</accession>
<feature type="chain" id="PRO_1000045557" description="Fumarate reductase subunit D">
    <location>
        <begin position="1"/>
        <end position="119"/>
    </location>
</feature>
<feature type="transmembrane region" description="Helical" evidence="1">
    <location>
        <begin position="25"/>
        <end position="45"/>
    </location>
</feature>
<feature type="transmembrane region" description="Helical" evidence="1">
    <location>
        <begin position="61"/>
        <end position="81"/>
    </location>
</feature>
<feature type="transmembrane region" description="Helical" evidence="1">
    <location>
        <begin position="99"/>
        <end position="119"/>
    </location>
</feature>
<reference key="1">
    <citation type="journal article" date="2005" name="Nucleic Acids Res.">
        <title>The genome sequence of Salmonella enterica serovar Choleraesuis, a highly invasive and resistant zoonotic pathogen.</title>
        <authorList>
            <person name="Chiu C.-H."/>
            <person name="Tang P."/>
            <person name="Chu C."/>
            <person name="Hu S."/>
            <person name="Bao Q."/>
            <person name="Yu J."/>
            <person name="Chou Y.-Y."/>
            <person name="Wang H.-S."/>
            <person name="Lee Y.-S."/>
        </authorList>
    </citation>
    <scope>NUCLEOTIDE SEQUENCE [LARGE SCALE GENOMIC DNA]</scope>
    <source>
        <strain>SC-B67</strain>
    </source>
</reference>
<proteinExistence type="inferred from homology"/>
<name>FRDD_SALCH</name>